<gene>
    <name evidence="2" type="primary">polB</name>
    <name type="ordered locus">OE_4390F</name>
</gene>
<evidence type="ECO:0000250" key="1"/>
<evidence type="ECO:0000255" key="2">
    <source>
        <dbReference type="HAMAP-Rule" id="MF_00325"/>
    </source>
</evidence>
<evidence type="ECO:0000256" key="3">
    <source>
        <dbReference type="SAM" id="MobiDB-lite"/>
    </source>
</evidence>
<organism>
    <name type="scientific">Halobacterium salinarum (strain ATCC 29341 / DSM 671 / R1)</name>
    <dbReference type="NCBI Taxonomy" id="478009"/>
    <lineage>
        <taxon>Archaea</taxon>
        <taxon>Methanobacteriati</taxon>
        <taxon>Methanobacteriota</taxon>
        <taxon>Stenosarchaea group</taxon>
        <taxon>Halobacteria</taxon>
        <taxon>Halobacteriales</taxon>
        <taxon>Halobacteriaceae</taxon>
        <taxon>Halobacterium</taxon>
        <taxon>Halobacterium salinarum NRC-34001</taxon>
    </lineage>
</organism>
<feature type="chain" id="PRO_1000116096" description="DNA polymerase II small subunit">
    <location>
        <begin position="1"/>
        <end position="508"/>
    </location>
</feature>
<feature type="region of interest" description="Disordered" evidence="3">
    <location>
        <begin position="66"/>
        <end position="122"/>
    </location>
</feature>
<feature type="compositionally biased region" description="Low complexity" evidence="3">
    <location>
        <begin position="66"/>
        <end position="80"/>
    </location>
</feature>
<feature type="compositionally biased region" description="Polar residues" evidence="3">
    <location>
        <begin position="86"/>
        <end position="95"/>
    </location>
</feature>
<name>DP2S_HALS3</name>
<comment type="function">
    <text evidence="1">Possesses two activities: a DNA synthesis (polymerase) and an exonucleolytic activity that degrades single-stranded DNA in the 3' to 5' direction. Has a template-primer preference which is characteristic of a replicative DNA polymerase (By similarity).</text>
</comment>
<comment type="catalytic activity">
    <reaction evidence="2">
        <text>DNA(n) + a 2'-deoxyribonucleoside 5'-triphosphate = DNA(n+1) + diphosphate</text>
        <dbReference type="Rhea" id="RHEA:22508"/>
        <dbReference type="Rhea" id="RHEA-COMP:17339"/>
        <dbReference type="Rhea" id="RHEA-COMP:17340"/>
        <dbReference type="ChEBI" id="CHEBI:33019"/>
        <dbReference type="ChEBI" id="CHEBI:61560"/>
        <dbReference type="ChEBI" id="CHEBI:173112"/>
        <dbReference type="EC" id="2.7.7.7"/>
    </reaction>
</comment>
<comment type="catalytic activity">
    <reaction evidence="2">
        <text>Exonucleolytic cleavage in the 3'- to 5'-direction to yield nucleoside 5'-phosphates.</text>
        <dbReference type="EC" id="3.1.11.1"/>
    </reaction>
</comment>
<comment type="subunit">
    <text evidence="2">Heterodimer of a large subunit and a small subunit.</text>
</comment>
<comment type="similarity">
    <text evidence="2">Belongs to the DNA polymerase delta/II small subunit family.</text>
</comment>
<proteinExistence type="inferred from homology"/>
<dbReference type="EC" id="2.7.7.7" evidence="2"/>
<dbReference type="EC" id="3.1.11.1" evidence="2"/>
<dbReference type="EMBL" id="AM774415">
    <property type="protein sequence ID" value="CAP14810.1"/>
    <property type="molecule type" value="Genomic_DNA"/>
</dbReference>
<dbReference type="RefSeq" id="WP_012289503.1">
    <property type="nucleotide sequence ID" value="NC_010364.1"/>
</dbReference>
<dbReference type="SMR" id="B0R7U1"/>
<dbReference type="EnsemblBacteria" id="CAP14810">
    <property type="protein sequence ID" value="CAP14810"/>
    <property type="gene ID" value="OE_4390F"/>
</dbReference>
<dbReference type="KEGG" id="hsl:OE_4390F"/>
<dbReference type="HOGENOM" id="CLU_027850_0_0_2"/>
<dbReference type="PhylomeDB" id="B0R7U1"/>
<dbReference type="Proteomes" id="UP000001321">
    <property type="component" value="Chromosome"/>
</dbReference>
<dbReference type="GO" id="GO:0042575">
    <property type="term" value="C:DNA polymerase complex"/>
    <property type="evidence" value="ECO:0007669"/>
    <property type="project" value="TreeGrafter"/>
</dbReference>
<dbReference type="GO" id="GO:0003677">
    <property type="term" value="F:DNA binding"/>
    <property type="evidence" value="ECO:0007669"/>
    <property type="project" value="UniProtKB-UniRule"/>
</dbReference>
<dbReference type="GO" id="GO:0003887">
    <property type="term" value="F:DNA-directed DNA polymerase activity"/>
    <property type="evidence" value="ECO:0007669"/>
    <property type="project" value="UniProtKB-UniRule"/>
</dbReference>
<dbReference type="GO" id="GO:0008310">
    <property type="term" value="F:single-stranded DNA 3'-5' DNA exonuclease activity"/>
    <property type="evidence" value="ECO:0007669"/>
    <property type="project" value="UniProtKB-EC"/>
</dbReference>
<dbReference type="GO" id="GO:0006308">
    <property type="term" value="P:DNA catabolic process"/>
    <property type="evidence" value="ECO:0007669"/>
    <property type="project" value="UniProtKB-UniRule"/>
</dbReference>
<dbReference type="GO" id="GO:0006271">
    <property type="term" value="P:DNA strand elongation involved in DNA replication"/>
    <property type="evidence" value="ECO:0007669"/>
    <property type="project" value="TreeGrafter"/>
</dbReference>
<dbReference type="CDD" id="cd07386">
    <property type="entry name" value="MPP_DNA_pol_II_small_archeal_C"/>
    <property type="match status" value="1"/>
</dbReference>
<dbReference type="CDD" id="cd04490">
    <property type="entry name" value="PolII_SU_OBF"/>
    <property type="match status" value="1"/>
</dbReference>
<dbReference type="FunFam" id="3.60.21.50:FF:000003">
    <property type="entry name" value="DNA polymerase II small subunit"/>
    <property type="match status" value="1"/>
</dbReference>
<dbReference type="Gene3D" id="3.60.21.50">
    <property type="match status" value="1"/>
</dbReference>
<dbReference type="HAMAP" id="MF_00325">
    <property type="entry name" value="DNApol_II_A_arch"/>
    <property type="match status" value="1"/>
</dbReference>
<dbReference type="InterPro" id="IPR007185">
    <property type="entry name" value="DNA_pol_a/d/e_bsu"/>
</dbReference>
<dbReference type="InterPro" id="IPR024826">
    <property type="entry name" value="DNA_pol_delta/II_ssu"/>
</dbReference>
<dbReference type="InterPro" id="IPR029052">
    <property type="entry name" value="Metallo-depent_PP-like"/>
</dbReference>
<dbReference type="InterPro" id="IPR011149">
    <property type="entry name" value="Pol2_small_arc"/>
</dbReference>
<dbReference type="NCBIfam" id="NF003116">
    <property type="entry name" value="PRK04036.1-1"/>
    <property type="match status" value="1"/>
</dbReference>
<dbReference type="NCBIfam" id="NF003118">
    <property type="entry name" value="PRK04036.1-3"/>
    <property type="match status" value="1"/>
</dbReference>
<dbReference type="PANTHER" id="PTHR10416">
    <property type="entry name" value="DNA POLYMERASE DELTA SUBUNIT 2"/>
    <property type="match status" value="1"/>
</dbReference>
<dbReference type="PANTHER" id="PTHR10416:SF0">
    <property type="entry name" value="DNA POLYMERASE DELTA SUBUNIT 2"/>
    <property type="match status" value="1"/>
</dbReference>
<dbReference type="Pfam" id="PF04042">
    <property type="entry name" value="DNA_pol_E_B"/>
    <property type="match status" value="1"/>
</dbReference>
<dbReference type="PIRSF" id="PIRSF000803">
    <property type="entry name" value="Arc_Pol2_small"/>
    <property type="match status" value="1"/>
</dbReference>
<dbReference type="SUPFAM" id="SSF56300">
    <property type="entry name" value="Metallo-dependent phosphatases"/>
    <property type="match status" value="1"/>
</dbReference>
<keyword id="KW-0235">DNA replication</keyword>
<keyword id="KW-0238">DNA-binding</keyword>
<keyword id="KW-0239">DNA-directed DNA polymerase</keyword>
<keyword id="KW-0269">Exonuclease</keyword>
<keyword id="KW-0378">Hydrolase</keyword>
<keyword id="KW-0511">Multifunctional enzyme</keyword>
<keyword id="KW-0540">Nuclease</keyword>
<keyword id="KW-0548">Nucleotidyltransferase</keyword>
<keyword id="KW-0808">Transferase</keyword>
<accession>B0R7U1</accession>
<reference key="1">
    <citation type="journal article" date="2008" name="Genomics">
        <title>Evolution in the laboratory: the genome of Halobacterium salinarum strain R1 compared to that of strain NRC-1.</title>
        <authorList>
            <person name="Pfeiffer F."/>
            <person name="Schuster S.C."/>
            <person name="Broicher A."/>
            <person name="Falb M."/>
            <person name="Palm P."/>
            <person name="Rodewald K."/>
            <person name="Ruepp A."/>
            <person name="Soppa J."/>
            <person name="Tittor J."/>
            <person name="Oesterhelt D."/>
        </authorList>
    </citation>
    <scope>NUCLEOTIDE SEQUENCE [LARGE SCALE GENOMIC DNA]</scope>
    <source>
        <strain>ATCC 29341 / DSM 671 / R1</strain>
    </source>
</reference>
<protein>
    <recommendedName>
        <fullName evidence="2">DNA polymerase II small subunit</fullName>
        <shortName evidence="2">Pol II</shortName>
        <ecNumber evidence="2">2.7.7.7</ecNumber>
    </recommendedName>
    <alternativeName>
        <fullName evidence="2">Exodeoxyribonuclease small subunit</fullName>
        <ecNumber evidence="2">3.1.11.1</ecNumber>
    </alternativeName>
</protein>
<sequence>MPLEPSVRVVRELTSRGYNADREAVTLLAGADDPGAAVERAVAAAAADAATLTVSDVRAVLDAHTASSAAQTSAPASTPPDEATTHTDPSATDTPPNHDGGRAATADARSVEIDGDMTGASTGTGEYQDFVSVFRDRYDRLAAQLRGRVNHRPTSALASMPGGSDAAIVGMVNDIRSTTSGHWRVELEDTNGVFPVLVLKDRDVSDLVDDLLLDEVIAVSGTLADDGTILFADDIYFPEVPRTYSPSTADRSVQAALISDVHVGSQEFAADAWRSFADWLHTPAAESVEYLLIAGDMVEGVGVYPGQDEELDIVDIYDQYETFAEHLKDVPGDMEIVMIPGNHDAVRLAEPQPAFDEELRSIMRAHDARITSNPSTVTIDGVSVLLYHGVSLDEVIAEHPSDDVTYDDPQNAMELLLKKRHVAPPFGGRTRLAPEAEDHLAIDTVPDVFHTGHVHKLGVGIHHNVRLVNSGCWQHQTAFQESVNISPDVATAPILDLDTLDITVHKFS</sequence>